<organism>
    <name type="scientific">Hydrophis hardwickii</name>
    <name type="common">Hardwick's spine-bellied seasnake</name>
    <name type="synonym">Lapemis hardwickii</name>
    <dbReference type="NCBI Taxonomy" id="8781"/>
    <lineage>
        <taxon>Eukaryota</taxon>
        <taxon>Metazoa</taxon>
        <taxon>Chordata</taxon>
        <taxon>Craniata</taxon>
        <taxon>Vertebrata</taxon>
        <taxon>Euteleostomi</taxon>
        <taxon>Lepidosauria</taxon>
        <taxon>Squamata</taxon>
        <taxon>Bifurcata</taxon>
        <taxon>Unidentata</taxon>
        <taxon>Episquamata</taxon>
        <taxon>Toxicofera</taxon>
        <taxon>Serpentes</taxon>
        <taxon>Colubroidea</taxon>
        <taxon>Elapidae</taxon>
        <taxon>Hydrophiinae</taxon>
        <taxon>Hydrophis</taxon>
    </lineage>
</organism>
<proteinExistence type="evidence at transcript level"/>
<name>PA2A5_HYDHA</name>
<keyword id="KW-0106">Calcium</keyword>
<keyword id="KW-1015">Disulfide bond</keyword>
<keyword id="KW-0378">Hydrolase</keyword>
<keyword id="KW-0442">Lipid degradation</keyword>
<keyword id="KW-0443">Lipid metabolism</keyword>
<keyword id="KW-0479">Metal-binding</keyword>
<keyword id="KW-0964">Secreted</keyword>
<keyword id="KW-0732">Signal</keyword>
<evidence type="ECO:0000250" key="1"/>
<evidence type="ECO:0000255" key="2"/>
<evidence type="ECO:0000255" key="3">
    <source>
        <dbReference type="PROSITE-ProRule" id="PRU10035"/>
    </source>
</evidence>
<evidence type="ECO:0000255" key="4">
    <source>
        <dbReference type="PROSITE-ProRule" id="PRU10036"/>
    </source>
</evidence>
<evidence type="ECO:0000305" key="5"/>
<comment type="function">
    <text evidence="1">PLA2 catalyzes the calcium-dependent hydrolysis of the 2-acyl groups in 3-sn-phosphoglycerides.</text>
</comment>
<comment type="catalytic activity">
    <reaction evidence="3 4">
        <text>a 1,2-diacyl-sn-glycero-3-phosphocholine + H2O = a 1-acyl-sn-glycero-3-phosphocholine + a fatty acid + H(+)</text>
        <dbReference type="Rhea" id="RHEA:15801"/>
        <dbReference type="ChEBI" id="CHEBI:15377"/>
        <dbReference type="ChEBI" id="CHEBI:15378"/>
        <dbReference type="ChEBI" id="CHEBI:28868"/>
        <dbReference type="ChEBI" id="CHEBI:57643"/>
        <dbReference type="ChEBI" id="CHEBI:58168"/>
        <dbReference type="EC" id="3.1.1.4"/>
    </reaction>
</comment>
<comment type="cofactor">
    <cofactor evidence="1">
        <name>Ca(2+)</name>
        <dbReference type="ChEBI" id="CHEBI:29108"/>
    </cofactor>
    <text evidence="1">Binds 1 Ca(2+) ion.</text>
</comment>
<comment type="subcellular location">
    <subcellularLocation>
        <location evidence="1">Secreted</location>
    </subcellularLocation>
</comment>
<comment type="tissue specificity">
    <text>Expressed by the venom gland.</text>
</comment>
<comment type="similarity">
    <text evidence="5">Belongs to the phospholipase A2 family. Group I subfamily. D49 sub-subfamily.</text>
</comment>
<protein>
    <recommendedName>
        <fullName>Acidic phospholipase A2 57</fullName>
        <shortName>svPLA2</shortName>
        <ecNumber>3.1.1.4</ecNumber>
    </recommendedName>
    <alternativeName>
        <fullName>Phosphatidylcholine 2-acylhydrolase</fullName>
    </alternativeName>
</protein>
<dbReference type="EC" id="3.1.1.4"/>
<dbReference type="EMBL" id="AF144319">
    <property type="protein sequence ID" value="AAL55555.1"/>
    <property type="molecule type" value="mRNA"/>
</dbReference>
<dbReference type="SMR" id="Q8UW31"/>
<dbReference type="GO" id="GO:0005576">
    <property type="term" value="C:extracellular region"/>
    <property type="evidence" value="ECO:0007669"/>
    <property type="project" value="UniProtKB-SubCell"/>
</dbReference>
<dbReference type="GO" id="GO:0005509">
    <property type="term" value="F:calcium ion binding"/>
    <property type="evidence" value="ECO:0007669"/>
    <property type="project" value="InterPro"/>
</dbReference>
<dbReference type="GO" id="GO:0047498">
    <property type="term" value="F:calcium-dependent phospholipase A2 activity"/>
    <property type="evidence" value="ECO:0007669"/>
    <property type="project" value="TreeGrafter"/>
</dbReference>
<dbReference type="GO" id="GO:0005543">
    <property type="term" value="F:phospholipid binding"/>
    <property type="evidence" value="ECO:0007669"/>
    <property type="project" value="TreeGrafter"/>
</dbReference>
<dbReference type="GO" id="GO:0005102">
    <property type="term" value="F:signaling receptor binding"/>
    <property type="evidence" value="ECO:0007669"/>
    <property type="project" value="TreeGrafter"/>
</dbReference>
<dbReference type="GO" id="GO:0050482">
    <property type="term" value="P:arachidonate secretion"/>
    <property type="evidence" value="ECO:0007669"/>
    <property type="project" value="InterPro"/>
</dbReference>
<dbReference type="GO" id="GO:0006633">
    <property type="term" value="P:fatty acid biosynthetic process"/>
    <property type="evidence" value="ECO:0007669"/>
    <property type="project" value="TreeGrafter"/>
</dbReference>
<dbReference type="GO" id="GO:0016042">
    <property type="term" value="P:lipid catabolic process"/>
    <property type="evidence" value="ECO:0007669"/>
    <property type="project" value="UniProtKB-KW"/>
</dbReference>
<dbReference type="GO" id="GO:0006644">
    <property type="term" value="P:phospholipid metabolic process"/>
    <property type="evidence" value="ECO:0007669"/>
    <property type="project" value="InterPro"/>
</dbReference>
<dbReference type="GO" id="GO:0048146">
    <property type="term" value="P:positive regulation of fibroblast proliferation"/>
    <property type="evidence" value="ECO:0007669"/>
    <property type="project" value="TreeGrafter"/>
</dbReference>
<dbReference type="CDD" id="cd00125">
    <property type="entry name" value="PLA2c"/>
    <property type="match status" value="1"/>
</dbReference>
<dbReference type="FunFam" id="1.20.90.10:FF:000007">
    <property type="entry name" value="Acidic phospholipase A2"/>
    <property type="match status" value="1"/>
</dbReference>
<dbReference type="Gene3D" id="1.20.90.10">
    <property type="entry name" value="Phospholipase A2 domain"/>
    <property type="match status" value="1"/>
</dbReference>
<dbReference type="InterPro" id="IPR001211">
    <property type="entry name" value="PLipase_A2"/>
</dbReference>
<dbReference type="InterPro" id="IPR033112">
    <property type="entry name" value="PLipase_A2_Asp_AS"/>
</dbReference>
<dbReference type="InterPro" id="IPR016090">
    <property type="entry name" value="PLipase_A2_dom"/>
</dbReference>
<dbReference type="InterPro" id="IPR036444">
    <property type="entry name" value="PLipase_A2_dom_sf"/>
</dbReference>
<dbReference type="InterPro" id="IPR033113">
    <property type="entry name" value="PLipase_A2_His_AS"/>
</dbReference>
<dbReference type="PANTHER" id="PTHR11716:SF94">
    <property type="entry name" value="PHOSPHOLIPASE A2"/>
    <property type="match status" value="1"/>
</dbReference>
<dbReference type="PANTHER" id="PTHR11716">
    <property type="entry name" value="PHOSPHOLIPASE A2 FAMILY MEMBER"/>
    <property type="match status" value="1"/>
</dbReference>
<dbReference type="Pfam" id="PF00068">
    <property type="entry name" value="Phospholip_A2_1"/>
    <property type="match status" value="1"/>
</dbReference>
<dbReference type="PRINTS" id="PR00389">
    <property type="entry name" value="PHPHLIPASEA2"/>
</dbReference>
<dbReference type="SMART" id="SM00085">
    <property type="entry name" value="PA2c"/>
    <property type="match status" value="1"/>
</dbReference>
<dbReference type="SUPFAM" id="SSF48619">
    <property type="entry name" value="Phospholipase A2, PLA2"/>
    <property type="match status" value="1"/>
</dbReference>
<dbReference type="PROSITE" id="PS00119">
    <property type="entry name" value="PA2_ASP"/>
    <property type="match status" value="1"/>
</dbReference>
<dbReference type="PROSITE" id="PS00118">
    <property type="entry name" value="PA2_HIS"/>
    <property type="match status" value="1"/>
</dbReference>
<feature type="signal peptide" evidence="2">
    <location>
        <begin position="1"/>
        <end position="21"/>
    </location>
</feature>
<feature type="propeptide" id="PRO_0000022873" evidence="1">
    <location>
        <begin position="22"/>
        <end position="27"/>
    </location>
</feature>
<feature type="chain" id="PRO_0000022874" description="Acidic phospholipase A2 57">
    <location>
        <begin position="28"/>
        <end position="152"/>
    </location>
</feature>
<feature type="active site" evidence="1">
    <location>
        <position position="75"/>
    </location>
</feature>
<feature type="active site" evidence="1">
    <location>
        <position position="126"/>
    </location>
</feature>
<feature type="binding site" evidence="1">
    <location>
        <position position="55"/>
    </location>
    <ligand>
        <name>Ca(2+)</name>
        <dbReference type="ChEBI" id="CHEBI:29108"/>
    </ligand>
</feature>
<feature type="binding site" evidence="1">
    <location>
        <position position="57"/>
    </location>
    <ligand>
        <name>Ca(2+)</name>
        <dbReference type="ChEBI" id="CHEBI:29108"/>
    </ligand>
</feature>
<feature type="binding site" evidence="1">
    <location>
        <position position="59"/>
    </location>
    <ligand>
        <name>Ca(2+)</name>
        <dbReference type="ChEBI" id="CHEBI:29108"/>
    </ligand>
</feature>
<feature type="binding site" evidence="1">
    <location>
        <position position="76"/>
    </location>
    <ligand>
        <name>Ca(2+)</name>
        <dbReference type="ChEBI" id="CHEBI:29108"/>
    </ligand>
</feature>
<feature type="disulfide bond" evidence="1">
    <location>
        <begin position="38"/>
        <end position="104"/>
    </location>
</feature>
<feature type="disulfide bond" evidence="1">
    <location>
        <begin position="54"/>
        <end position="151"/>
    </location>
</feature>
<feature type="disulfide bond" evidence="1">
    <location>
        <begin position="56"/>
        <end position="72"/>
    </location>
</feature>
<feature type="disulfide bond" evidence="1">
    <location>
        <begin position="71"/>
        <end position="132"/>
    </location>
</feature>
<feature type="disulfide bond" evidence="1">
    <location>
        <begin position="78"/>
        <end position="125"/>
    </location>
</feature>
<feature type="disulfide bond" evidence="1">
    <location>
        <begin position="88"/>
        <end position="118"/>
    </location>
</feature>
<feature type="disulfide bond" evidence="1">
    <location>
        <begin position="111"/>
        <end position="123"/>
    </location>
</feature>
<accession>Q8UW31</accession>
<sequence>MYPAHLLGLLAVCVSLLGAASIPPLPLNLYQFKNMIQCANHGSRMTLDYMDYGCYCGTGGSGTPVDELDRCCKIHDDCYGEAEKLPACNYMLSGPYYNLYTYDCVEHQLTCKDNNDECKAFICNCDRTAAICFAGAPYNKENYNIDLNKHCQ</sequence>
<reference key="1">
    <citation type="submission" date="1999-04" db="EMBL/GenBank/DDBJ databases">
        <title>Phospholipase A2 from Hardwick's sea snake.</title>
        <authorList>
            <person name="Zhong X."/>
            <person name="Zhao G."/>
            <person name="Wei J."/>
            <person name="Yang W."/>
            <person name="Xu A."/>
        </authorList>
    </citation>
    <scope>NUCLEOTIDE SEQUENCE [MRNA]</scope>
</reference>